<accession>B4TFB2</accession>
<protein>
    <recommendedName>
        <fullName evidence="1">HTH-type transcriptional repressor NsrR</fullName>
    </recommendedName>
</protein>
<name>NSRR_SALHS</name>
<comment type="function">
    <text evidence="1">Nitric oxide-sensitive repressor of genes involved in protecting the cell against nitrosative stress. May require iron for activity.</text>
</comment>
<comment type="cofactor">
    <cofactor evidence="1">
        <name>[2Fe-2S] cluster</name>
        <dbReference type="ChEBI" id="CHEBI:190135"/>
    </cofactor>
    <text evidence="1">Binds 1 [2Fe-2S] cluster per subunit.</text>
</comment>
<organism>
    <name type="scientific">Salmonella heidelberg (strain SL476)</name>
    <dbReference type="NCBI Taxonomy" id="454169"/>
    <lineage>
        <taxon>Bacteria</taxon>
        <taxon>Pseudomonadati</taxon>
        <taxon>Pseudomonadota</taxon>
        <taxon>Gammaproteobacteria</taxon>
        <taxon>Enterobacterales</taxon>
        <taxon>Enterobacteriaceae</taxon>
        <taxon>Salmonella</taxon>
    </lineage>
</organism>
<feature type="chain" id="PRO_1000138129" description="HTH-type transcriptional repressor NsrR">
    <location>
        <begin position="1"/>
        <end position="141"/>
    </location>
</feature>
<feature type="domain" description="HTH rrf2-type" evidence="1">
    <location>
        <begin position="2"/>
        <end position="129"/>
    </location>
</feature>
<feature type="DNA-binding region" description="H-T-H motif" evidence="1">
    <location>
        <begin position="28"/>
        <end position="51"/>
    </location>
</feature>
<feature type="binding site" evidence="1">
    <location>
        <position position="91"/>
    </location>
    <ligand>
        <name>[2Fe-2S] cluster</name>
        <dbReference type="ChEBI" id="CHEBI:190135"/>
    </ligand>
</feature>
<feature type="binding site" evidence="1">
    <location>
        <position position="96"/>
    </location>
    <ligand>
        <name>[2Fe-2S] cluster</name>
        <dbReference type="ChEBI" id="CHEBI:190135"/>
    </ligand>
</feature>
<feature type="binding site" evidence="1">
    <location>
        <position position="102"/>
    </location>
    <ligand>
        <name>[2Fe-2S] cluster</name>
        <dbReference type="ChEBI" id="CHEBI:190135"/>
    </ligand>
</feature>
<dbReference type="EMBL" id="CP001120">
    <property type="protein sequence ID" value="ACF68469.1"/>
    <property type="molecule type" value="Genomic_DNA"/>
</dbReference>
<dbReference type="RefSeq" id="WP_001177632.1">
    <property type="nucleotide sequence ID" value="NC_011083.1"/>
</dbReference>
<dbReference type="SMR" id="B4TFB2"/>
<dbReference type="KEGG" id="seh:SeHA_C4785"/>
<dbReference type="HOGENOM" id="CLU_107144_2_1_6"/>
<dbReference type="Proteomes" id="UP000001866">
    <property type="component" value="Chromosome"/>
</dbReference>
<dbReference type="GO" id="GO:0005829">
    <property type="term" value="C:cytosol"/>
    <property type="evidence" value="ECO:0007669"/>
    <property type="project" value="TreeGrafter"/>
</dbReference>
<dbReference type="GO" id="GO:0051537">
    <property type="term" value="F:2 iron, 2 sulfur cluster binding"/>
    <property type="evidence" value="ECO:0007669"/>
    <property type="project" value="UniProtKB-KW"/>
</dbReference>
<dbReference type="GO" id="GO:0003700">
    <property type="term" value="F:DNA-binding transcription factor activity"/>
    <property type="evidence" value="ECO:0007669"/>
    <property type="project" value="UniProtKB-UniRule"/>
</dbReference>
<dbReference type="GO" id="GO:0003690">
    <property type="term" value="F:double-stranded DNA binding"/>
    <property type="evidence" value="ECO:0007669"/>
    <property type="project" value="UniProtKB-UniRule"/>
</dbReference>
<dbReference type="GO" id="GO:0005506">
    <property type="term" value="F:iron ion binding"/>
    <property type="evidence" value="ECO:0007669"/>
    <property type="project" value="UniProtKB-UniRule"/>
</dbReference>
<dbReference type="GO" id="GO:0045892">
    <property type="term" value="P:negative regulation of DNA-templated transcription"/>
    <property type="evidence" value="ECO:0007669"/>
    <property type="project" value="InterPro"/>
</dbReference>
<dbReference type="FunFam" id="1.10.10.10:FF:000105">
    <property type="entry name" value="HTH-type transcriptional repressor NsrR"/>
    <property type="match status" value="1"/>
</dbReference>
<dbReference type="Gene3D" id="1.10.10.10">
    <property type="entry name" value="Winged helix-like DNA-binding domain superfamily/Winged helix DNA-binding domain"/>
    <property type="match status" value="1"/>
</dbReference>
<dbReference type="HAMAP" id="MF_01177">
    <property type="entry name" value="HTH_type_NsrR"/>
    <property type="match status" value="1"/>
</dbReference>
<dbReference type="InterPro" id="IPR000944">
    <property type="entry name" value="Tscrpt_reg_Rrf2"/>
</dbReference>
<dbReference type="InterPro" id="IPR023761">
    <property type="entry name" value="Tscrpt_rep_HTH_NsrR"/>
</dbReference>
<dbReference type="InterPro" id="IPR036388">
    <property type="entry name" value="WH-like_DNA-bd_sf"/>
</dbReference>
<dbReference type="InterPro" id="IPR036390">
    <property type="entry name" value="WH_DNA-bd_sf"/>
</dbReference>
<dbReference type="NCBIfam" id="NF008240">
    <property type="entry name" value="PRK11014.1"/>
    <property type="match status" value="1"/>
</dbReference>
<dbReference type="NCBIfam" id="TIGR00738">
    <property type="entry name" value="rrf2_super"/>
    <property type="match status" value="1"/>
</dbReference>
<dbReference type="PANTHER" id="PTHR33221:SF4">
    <property type="entry name" value="HTH-TYPE TRANSCRIPTIONAL REPRESSOR NSRR"/>
    <property type="match status" value="1"/>
</dbReference>
<dbReference type="PANTHER" id="PTHR33221">
    <property type="entry name" value="WINGED HELIX-TURN-HELIX TRANSCRIPTIONAL REGULATOR, RRF2 FAMILY"/>
    <property type="match status" value="1"/>
</dbReference>
<dbReference type="Pfam" id="PF02082">
    <property type="entry name" value="Rrf2"/>
    <property type="match status" value="1"/>
</dbReference>
<dbReference type="SUPFAM" id="SSF46785">
    <property type="entry name" value="Winged helix' DNA-binding domain"/>
    <property type="match status" value="1"/>
</dbReference>
<dbReference type="PROSITE" id="PS51197">
    <property type="entry name" value="HTH_RRF2_2"/>
    <property type="match status" value="1"/>
</dbReference>
<reference key="1">
    <citation type="journal article" date="2011" name="J. Bacteriol.">
        <title>Comparative genomics of 28 Salmonella enterica isolates: evidence for CRISPR-mediated adaptive sublineage evolution.</title>
        <authorList>
            <person name="Fricke W.F."/>
            <person name="Mammel M.K."/>
            <person name="McDermott P.F."/>
            <person name="Tartera C."/>
            <person name="White D.G."/>
            <person name="Leclerc J.E."/>
            <person name="Ravel J."/>
            <person name="Cebula T.A."/>
        </authorList>
    </citation>
    <scope>NUCLEOTIDE SEQUENCE [LARGE SCALE GENOMIC DNA]</scope>
    <source>
        <strain>SL476</strain>
    </source>
</reference>
<evidence type="ECO:0000255" key="1">
    <source>
        <dbReference type="HAMAP-Rule" id="MF_01177"/>
    </source>
</evidence>
<proteinExistence type="inferred from homology"/>
<sequence>MQLTSFTDYGLRALIYMASLPDGRMTSISEVTEVYGVSRNHMVKIINQLSRAGFVTAVRGKNGGIRLGKPANTICIGDVVRELEPLSLVNCSSEFCHITPACRLKQALSKAVQSFLKELDNYTLADLVEENQPLYKLLLVE</sequence>
<keyword id="KW-0001">2Fe-2S</keyword>
<keyword id="KW-0238">DNA-binding</keyword>
<keyword id="KW-0408">Iron</keyword>
<keyword id="KW-0411">Iron-sulfur</keyword>
<keyword id="KW-0479">Metal-binding</keyword>
<keyword id="KW-0678">Repressor</keyword>
<keyword id="KW-0804">Transcription</keyword>
<keyword id="KW-0805">Transcription regulation</keyword>
<gene>
    <name evidence="1" type="primary">nsrR</name>
    <name type="ordered locus">SeHA_C4785</name>
</gene>